<dbReference type="EC" id="2.7.1.91" evidence="5 7 9"/>
<dbReference type="EMBL" id="AF245448">
    <property type="protein sequence ID" value="AAF74125.1"/>
    <property type="molecule type" value="mRNA"/>
</dbReference>
<dbReference type="EMBL" id="AF415214">
    <property type="protein sequence ID" value="AAL07500.1"/>
    <property type="molecule type" value="mRNA"/>
</dbReference>
<dbReference type="EMBL" id="AK004951">
    <property type="protein sequence ID" value="BAB23694.1"/>
    <property type="molecule type" value="mRNA"/>
</dbReference>
<dbReference type="EMBL" id="BC006941">
    <property type="protein sequence ID" value="AAH06941.1"/>
    <property type="molecule type" value="mRNA"/>
</dbReference>
<dbReference type="EMBL" id="BC053737">
    <property type="protein sequence ID" value="AAH53737.1"/>
    <property type="molecule type" value="mRNA"/>
</dbReference>
<dbReference type="CCDS" id="CCDS21261.1"/>
<dbReference type="RefSeq" id="NP_001166032.1">
    <property type="nucleotide sequence ID" value="NM_001172561.1"/>
</dbReference>
<dbReference type="RefSeq" id="NP_064395.2">
    <property type="nucleotide sequence ID" value="NM_020011.5"/>
</dbReference>
<dbReference type="RefSeq" id="NP_975009.1">
    <property type="nucleotide sequence ID" value="NM_203280.3"/>
</dbReference>
<dbReference type="RefSeq" id="XP_006541075.1">
    <property type="nucleotide sequence ID" value="XM_006541012.5"/>
</dbReference>
<dbReference type="RefSeq" id="XP_006541076.1">
    <property type="nucleotide sequence ID" value="XM_006541013.3"/>
</dbReference>
<dbReference type="RefSeq" id="XP_036009169.1">
    <property type="nucleotide sequence ID" value="XM_036153276.1"/>
</dbReference>
<dbReference type="SMR" id="Q9JIA7"/>
<dbReference type="BioGRID" id="208112">
    <property type="interactions" value="1"/>
</dbReference>
<dbReference type="FunCoup" id="Q9JIA7">
    <property type="interactions" value="3403"/>
</dbReference>
<dbReference type="IntAct" id="Q9JIA7">
    <property type="interactions" value="5"/>
</dbReference>
<dbReference type="STRING" id="10090.ENSMUSP00000103366"/>
<dbReference type="BindingDB" id="Q9JIA7"/>
<dbReference type="ChEMBL" id="CHEMBL1075305"/>
<dbReference type="SwissLipids" id="SLP:000000113"/>
<dbReference type="iPTMnet" id="Q9JIA7"/>
<dbReference type="PhosphoSitePlus" id="Q9JIA7"/>
<dbReference type="SwissPalm" id="Q9JIA7"/>
<dbReference type="jPOST" id="Q9JIA7"/>
<dbReference type="PaxDb" id="10090-ENSMUSP00000072615"/>
<dbReference type="ProteomicsDB" id="261572"/>
<dbReference type="Pumba" id="Q9JIA7"/>
<dbReference type="Antibodypedia" id="31745">
    <property type="antibodies" value="448 antibodies from 37 providers"/>
</dbReference>
<dbReference type="DNASU" id="56632"/>
<dbReference type="Ensembl" id="ENSMUST00000072836.7">
    <property type="protein sequence ID" value="ENSMUSP00000072615.5"/>
    <property type="gene ID" value="ENSMUSG00000057342.16"/>
</dbReference>
<dbReference type="Ensembl" id="ENSMUST00000107737.11">
    <property type="protein sequence ID" value="ENSMUSP00000103366.3"/>
    <property type="gene ID" value="ENSMUSG00000057342.16"/>
</dbReference>
<dbReference type="Ensembl" id="ENSMUST00000210060.2">
    <property type="protein sequence ID" value="ENSMUSP00000147391.2"/>
    <property type="gene ID" value="ENSMUSG00000057342.16"/>
</dbReference>
<dbReference type="GeneID" id="56632"/>
<dbReference type="KEGG" id="mmu:56632"/>
<dbReference type="UCSC" id="uc009gwt.2">
    <property type="organism name" value="mouse"/>
</dbReference>
<dbReference type="AGR" id="MGI:1861380"/>
<dbReference type="CTD" id="56848"/>
<dbReference type="MGI" id="MGI:1861380">
    <property type="gene designation" value="Sphk2"/>
</dbReference>
<dbReference type="VEuPathDB" id="HostDB:ENSMUSG00000057342"/>
<dbReference type="eggNOG" id="KOG1116">
    <property type="taxonomic scope" value="Eukaryota"/>
</dbReference>
<dbReference type="GeneTree" id="ENSGT00940000161197"/>
<dbReference type="HOGENOM" id="CLU_013399_1_1_1"/>
<dbReference type="InParanoid" id="Q9JIA7"/>
<dbReference type="OMA" id="KHYVMYS"/>
<dbReference type="OrthoDB" id="3853857at2759"/>
<dbReference type="PhylomeDB" id="Q9JIA7"/>
<dbReference type="TreeFam" id="TF354296"/>
<dbReference type="BRENDA" id="2.7.1.91">
    <property type="organism ID" value="3474"/>
</dbReference>
<dbReference type="Reactome" id="R-MMU-1660661">
    <property type="pathway name" value="Sphingolipid de novo biosynthesis"/>
</dbReference>
<dbReference type="SABIO-RK" id="Q9JIA7"/>
<dbReference type="BioGRID-ORCS" id="56632">
    <property type="hits" value="6 hits in 78 CRISPR screens"/>
</dbReference>
<dbReference type="ChiTaRS" id="Sphk2">
    <property type="organism name" value="mouse"/>
</dbReference>
<dbReference type="PRO" id="PR:Q9JIA7"/>
<dbReference type="Proteomes" id="UP000000589">
    <property type="component" value="Chromosome 7"/>
</dbReference>
<dbReference type="RNAct" id="Q9JIA7">
    <property type="molecule type" value="protein"/>
</dbReference>
<dbReference type="Bgee" id="ENSMUSG00000057342">
    <property type="expression patterns" value="Expressed in saccule of membranous labyrinth and 238 other cell types or tissues"/>
</dbReference>
<dbReference type="ExpressionAtlas" id="Q9JIA7">
    <property type="expression patterns" value="baseline and differential"/>
</dbReference>
<dbReference type="GO" id="GO:0005737">
    <property type="term" value="C:cytoplasm"/>
    <property type="evidence" value="ECO:0000314"/>
    <property type="project" value="UniProtKB"/>
</dbReference>
<dbReference type="GO" id="GO:0005829">
    <property type="term" value="C:cytosol"/>
    <property type="evidence" value="ECO:0000314"/>
    <property type="project" value="UniProtKB"/>
</dbReference>
<dbReference type="GO" id="GO:0005783">
    <property type="term" value="C:endoplasmic reticulum"/>
    <property type="evidence" value="ECO:0000314"/>
    <property type="project" value="UniProtKB"/>
</dbReference>
<dbReference type="GO" id="GO:0005765">
    <property type="term" value="C:lysosomal membrane"/>
    <property type="evidence" value="ECO:0007669"/>
    <property type="project" value="UniProtKB-SubCell"/>
</dbReference>
<dbReference type="GO" id="GO:0016020">
    <property type="term" value="C:membrane"/>
    <property type="evidence" value="ECO:0000314"/>
    <property type="project" value="UniProtKB"/>
</dbReference>
<dbReference type="GO" id="GO:0005743">
    <property type="term" value="C:mitochondrial inner membrane"/>
    <property type="evidence" value="ECO:0000314"/>
    <property type="project" value="UniProtKB"/>
</dbReference>
<dbReference type="GO" id="GO:0005739">
    <property type="term" value="C:mitochondrion"/>
    <property type="evidence" value="ECO:0000314"/>
    <property type="project" value="UniProtKB"/>
</dbReference>
<dbReference type="GO" id="GO:0005654">
    <property type="term" value="C:nucleoplasm"/>
    <property type="evidence" value="ECO:0007669"/>
    <property type="project" value="Ensembl"/>
</dbReference>
<dbReference type="GO" id="GO:0000786">
    <property type="term" value="C:nucleosome"/>
    <property type="evidence" value="ECO:0000250"/>
    <property type="project" value="UniProtKB"/>
</dbReference>
<dbReference type="GO" id="GO:0005634">
    <property type="term" value="C:nucleus"/>
    <property type="evidence" value="ECO:0000314"/>
    <property type="project" value="UniProtKB"/>
</dbReference>
<dbReference type="GO" id="GO:0005886">
    <property type="term" value="C:plasma membrane"/>
    <property type="evidence" value="ECO:0007669"/>
    <property type="project" value="UniProtKB-SubCell"/>
</dbReference>
<dbReference type="GO" id="GO:0005524">
    <property type="term" value="F:ATP binding"/>
    <property type="evidence" value="ECO:0007669"/>
    <property type="project" value="UniProtKB-KW"/>
</dbReference>
<dbReference type="GO" id="GO:0017050">
    <property type="term" value="F:D-erythro-sphingosine kinase activity"/>
    <property type="evidence" value="ECO:0000314"/>
    <property type="project" value="UniProtKB"/>
</dbReference>
<dbReference type="GO" id="GO:0042393">
    <property type="term" value="F:histone binding"/>
    <property type="evidence" value="ECO:0007669"/>
    <property type="project" value="Ensembl"/>
</dbReference>
<dbReference type="GO" id="GO:0008481">
    <property type="term" value="F:sphingosine kinase activity"/>
    <property type="evidence" value="ECO:0000250"/>
    <property type="project" value="UniProtKB"/>
</dbReference>
<dbReference type="GO" id="GO:0038036">
    <property type="term" value="F:sphingosine-1-phosphate receptor activity"/>
    <property type="evidence" value="ECO:0007669"/>
    <property type="project" value="Ensembl"/>
</dbReference>
<dbReference type="GO" id="GO:0001568">
    <property type="term" value="P:blood vessel development"/>
    <property type="evidence" value="ECO:0000316"/>
    <property type="project" value="MGI"/>
</dbReference>
<dbReference type="GO" id="GO:0007420">
    <property type="term" value="P:brain development"/>
    <property type="evidence" value="ECO:0000316"/>
    <property type="project" value="MGI"/>
</dbReference>
<dbReference type="GO" id="GO:0008283">
    <property type="term" value="P:cell population proliferation"/>
    <property type="evidence" value="ECO:0000316"/>
    <property type="project" value="MGI"/>
</dbReference>
<dbReference type="GO" id="GO:1904628">
    <property type="term" value="P:cellular response to phorbol 13-acetate 12-myristate"/>
    <property type="evidence" value="ECO:0000250"/>
    <property type="project" value="UniProtKB"/>
</dbReference>
<dbReference type="GO" id="GO:0007565">
    <property type="term" value="P:female pregnancy"/>
    <property type="evidence" value="ECO:0007669"/>
    <property type="project" value="Ensembl"/>
</dbReference>
<dbReference type="GO" id="GO:0035556">
    <property type="term" value="P:intracellular signal transduction"/>
    <property type="evidence" value="ECO:0000315"/>
    <property type="project" value="UniProtKB"/>
</dbReference>
<dbReference type="GO" id="GO:0030308">
    <property type="term" value="P:negative regulation of cell growth"/>
    <property type="evidence" value="ECO:0000314"/>
    <property type="project" value="UniProtKB"/>
</dbReference>
<dbReference type="GO" id="GO:0043065">
    <property type="term" value="P:positive regulation of apoptotic process"/>
    <property type="evidence" value="ECO:0000314"/>
    <property type="project" value="UniProtKB"/>
</dbReference>
<dbReference type="GO" id="GO:0008284">
    <property type="term" value="P:positive regulation of cell population proliferation"/>
    <property type="evidence" value="ECO:0000316"/>
    <property type="project" value="MGI"/>
</dbReference>
<dbReference type="GO" id="GO:2000304">
    <property type="term" value="P:positive regulation of ceramide biosynthetic process"/>
    <property type="evidence" value="ECO:0000314"/>
    <property type="project" value="UniProtKB"/>
</dbReference>
<dbReference type="GO" id="GO:0002720">
    <property type="term" value="P:positive regulation of cytokine production involved in immune response"/>
    <property type="evidence" value="ECO:0000315"/>
    <property type="project" value="UniProtKB"/>
</dbReference>
<dbReference type="GO" id="GO:0032736">
    <property type="term" value="P:positive regulation of interleukin-13 production"/>
    <property type="evidence" value="ECO:0000315"/>
    <property type="project" value="UniProtKB"/>
</dbReference>
<dbReference type="GO" id="GO:0032755">
    <property type="term" value="P:positive regulation of interleukin-6 production"/>
    <property type="evidence" value="ECO:0000315"/>
    <property type="project" value="UniProtKB"/>
</dbReference>
<dbReference type="GO" id="GO:0033008">
    <property type="term" value="P:positive regulation of mast cell activation involved in immune response"/>
    <property type="evidence" value="ECO:0000315"/>
    <property type="project" value="UniProtKB"/>
</dbReference>
<dbReference type="GO" id="GO:0043306">
    <property type="term" value="P:positive regulation of mast cell degranulation"/>
    <property type="evidence" value="ECO:0000315"/>
    <property type="project" value="UniProtKB"/>
</dbReference>
<dbReference type="GO" id="GO:0032760">
    <property type="term" value="P:positive regulation of tumor necrosis factor production"/>
    <property type="evidence" value="ECO:0000315"/>
    <property type="project" value="UniProtKB"/>
</dbReference>
<dbReference type="GO" id="GO:2001169">
    <property type="term" value="P:regulation of ATP biosynthetic process"/>
    <property type="evidence" value="ECO:0000315"/>
    <property type="project" value="UniProtKB"/>
</dbReference>
<dbReference type="GO" id="GO:0043122">
    <property type="term" value="P:regulation of canonical NF-kappaB signal transduction"/>
    <property type="evidence" value="ECO:0000315"/>
    <property type="project" value="UniProtKB"/>
</dbReference>
<dbReference type="GO" id="GO:1904959">
    <property type="term" value="P:regulation of cytochrome-c oxidase activity"/>
    <property type="evidence" value="ECO:0000315"/>
    <property type="project" value="UniProtKB"/>
</dbReference>
<dbReference type="GO" id="GO:1903426">
    <property type="term" value="P:regulation of reactive oxygen species biosynthetic process"/>
    <property type="evidence" value="ECO:0000315"/>
    <property type="project" value="UniProtKB"/>
</dbReference>
<dbReference type="GO" id="GO:0006669">
    <property type="term" value="P:sphinganine-1-phosphate biosynthetic process"/>
    <property type="evidence" value="ECO:0000314"/>
    <property type="project" value="UniProtKB"/>
</dbReference>
<dbReference type="GO" id="GO:0046512">
    <property type="term" value="P:sphingosine biosynthetic process"/>
    <property type="evidence" value="ECO:0007669"/>
    <property type="project" value="Ensembl"/>
</dbReference>
<dbReference type="GO" id="GO:0006670">
    <property type="term" value="P:sphingosine metabolic process"/>
    <property type="evidence" value="ECO:0000315"/>
    <property type="project" value="UniProtKB"/>
</dbReference>
<dbReference type="GO" id="GO:0045815">
    <property type="term" value="P:transcription initiation-coupled chromatin remodeling"/>
    <property type="evidence" value="ECO:0000250"/>
    <property type="project" value="UniProtKB"/>
</dbReference>
<dbReference type="FunFam" id="3.40.50.10330:FF:000005">
    <property type="entry name" value="Sphingosine kinase 2"/>
    <property type="match status" value="1"/>
</dbReference>
<dbReference type="Gene3D" id="2.60.200.40">
    <property type="match status" value="1"/>
</dbReference>
<dbReference type="Gene3D" id="3.40.50.10330">
    <property type="entry name" value="Probable inorganic polyphosphate/atp-NAD kinase, domain 1"/>
    <property type="match status" value="1"/>
</dbReference>
<dbReference type="InterPro" id="IPR017438">
    <property type="entry name" value="ATP-NAD_kinase_N"/>
</dbReference>
<dbReference type="InterPro" id="IPR001206">
    <property type="entry name" value="Diacylglycerol_kinase_cat_dom"/>
</dbReference>
<dbReference type="InterPro" id="IPR050187">
    <property type="entry name" value="Lipid_Phosphate_FormReg"/>
</dbReference>
<dbReference type="InterPro" id="IPR016064">
    <property type="entry name" value="NAD/diacylglycerol_kinase_sf"/>
</dbReference>
<dbReference type="InterPro" id="IPR045540">
    <property type="entry name" value="YegS/DAGK_C"/>
</dbReference>
<dbReference type="PANTHER" id="PTHR12358">
    <property type="entry name" value="SPHINGOSINE KINASE"/>
    <property type="match status" value="1"/>
</dbReference>
<dbReference type="PANTHER" id="PTHR12358:SF40">
    <property type="entry name" value="SPHINGOSINE KINASE 2"/>
    <property type="match status" value="1"/>
</dbReference>
<dbReference type="Pfam" id="PF00781">
    <property type="entry name" value="DAGK_cat"/>
    <property type="match status" value="1"/>
</dbReference>
<dbReference type="Pfam" id="PF19279">
    <property type="entry name" value="YegS_C"/>
    <property type="match status" value="1"/>
</dbReference>
<dbReference type="SMART" id="SM00046">
    <property type="entry name" value="DAGKc"/>
    <property type="match status" value="1"/>
</dbReference>
<dbReference type="SUPFAM" id="SSF111331">
    <property type="entry name" value="NAD kinase/diacylglycerol kinase-like"/>
    <property type="match status" value="1"/>
</dbReference>
<dbReference type="PROSITE" id="PS50146">
    <property type="entry name" value="DAGK"/>
    <property type="match status" value="1"/>
</dbReference>
<name>SPHK2_MOUSE</name>
<reference key="1">
    <citation type="journal article" date="2000" name="J. Biol. Chem.">
        <title>Molecular cloning and functional characterization of a novel mammalian sphingosine kinase type 2 isoform.</title>
        <authorList>
            <person name="Liu H."/>
            <person name="Sugiura M."/>
            <person name="Nava V.E."/>
            <person name="Edsall L.C."/>
            <person name="Kono K."/>
            <person name="Poulton S."/>
            <person name="Milstien S."/>
            <person name="Kohama T."/>
            <person name="Spiegel S."/>
        </authorList>
    </citation>
    <scope>NUCLEOTIDE SEQUENCE [MRNA]</scope>
    <scope>CHARACTERIZATION</scope>
    <scope>CATALYTIC ACTIVITY</scope>
    <scope>TISSUE SPECIFICITY</scope>
    <scope>BIOPHYSICOCHEMICAL PROPERTIES</scope>
    <scope>SUBSTRATE SPECIFICITY</scope>
    <scope>FUNCTION</scope>
    <source>
        <strain>ICR</strain>
        <tissue>Brain</tissue>
    </source>
</reference>
<reference key="2">
    <citation type="submission" date="2001-08" db="EMBL/GenBank/DDBJ databases">
        <authorList>
            <person name="Thompson D."/>
            <person name="Pyne S."/>
        </authorList>
    </citation>
    <scope>NUCLEOTIDE SEQUENCE [MRNA]</scope>
</reference>
<reference key="3">
    <citation type="journal article" date="2005" name="Science">
        <title>The transcriptional landscape of the mammalian genome.</title>
        <authorList>
            <person name="Carninci P."/>
            <person name="Kasukawa T."/>
            <person name="Katayama S."/>
            <person name="Gough J."/>
            <person name="Frith M.C."/>
            <person name="Maeda N."/>
            <person name="Oyama R."/>
            <person name="Ravasi T."/>
            <person name="Lenhard B."/>
            <person name="Wells C."/>
            <person name="Kodzius R."/>
            <person name="Shimokawa K."/>
            <person name="Bajic V.B."/>
            <person name="Brenner S.E."/>
            <person name="Batalov S."/>
            <person name="Forrest A.R."/>
            <person name="Zavolan M."/>
            <person name="Davis M.J."/>
            <person name="Wilming L.G."/>
            <person name="Aidinis V."/>
            <person name="Allen J.E."/>
            <person name="Ambesi-Impiombato A."/>
            <person name="Apweiler R."/>
            <person name="Aturaliya R.N."/>
            <person name="Bailey T.L."/>
            <person name="Bansal M."/>
            <person name="Baxter L."/>
            <person name="Beisel K.W."/>
            <person name="Bersano T."/>
            <person name="Bono H."/>
            <person name="Chalk A.M."/>
            <person name="Chiu K.P."/>
            <person name="Choudhary V."/>
            <person name="Christoffels A."/>
            <person name="Clutterbuck D.R."/>
            <person name="Crowe M.L."/>
            <person name="Dalla E."/>
            <person name="Dalrymple B.P."/>
            <person name="de Bono B."/>
            <person name="Della Gatta G."/>
            <person name="di Bernardo D."/>
            <person name="Down T."/>
            <person name="Engstrom P."/>
            <person name="Fagiolini M."/>
            <person name="Faulkner G."/>
            <person name="Fletcher C.F."/>
            <person name="Fukushima T."/>
            <person name="Furuno M."/>
            <person name="Futaki S."/>
            <person name="Gariboldi M."/>
            <person name="Georgii-Hemming P."/>
            <person name="Gingeras T.R."/>
            <person name="Gojobori T."/>
            <person name="Green R.E."/>
            <person name="Gustincich S."/>
            <person name="Harbers M."/>
            <person name="Hayashi Y."/>
            <person name="Hensch T.K."/>
            <person name="Hirokawa N."/>
            <person name="Hill D."/>
            <person name="Huminiecki L."/>
            <person name="Iacono M."/>
            <person name="Ikeo K."/>
            <person name="Iwama A."/>
            <person name="Ishikawa T."/>
            <person name="Jakt M."/>
            <person name="Kanapin A."/>
            <person name="Katoh M."/>
            <person name="Kawasawa Y."/>
            <person name="Kelso J."/>
            <person name="Kitamura H."/>
            <person name="Kitano H."/>
            <person name="Kollias G."/>
            <person name="Krishnan S.P."/>
            <person name="Kruger A."/>
            <person name="Kummerfeld S.K."/>
            <person name="Kurochkin I.V."/>
            <person name="Lareau L.F."/>
            <person name="Lazarevic D."/>
            <person name="Lipovich L."/>
            <person name="Liu J."/>
            <person name="Liuni S."/>
            <person name="McWilliam S."/>
            <person name="Madan Babu M."/>
            <person name="Madera M."/>
            <person name="Marchionni L."/>
            <person name="Matsuda H."/>
            <person name="Matsuzawa S."/>
            <person name="Miki H."/>
            <person name="Mignone F."/>
            <person name="Miyake S."/>
            <person name="Morris K."/>
            <person name="Mottagui-Tabar S."/>
            <person name="Mulder N."/>
            <person name="Nakano N."/>
            <person name="Nakauchi H."/>
            <person name="Ng P."/>
            <person name="Nilsson R."/>
            <person name="Nishiguchi S."/>
            <person name="Nishikawa S."/>
            <person name="Nori F."/>
            <person name="Ohara O."/>
            <person name="Okazaki Y."/>
            <person name="Orlando V."/>
            <person name="Pang K.C."/>
            <person name="Pavan W.J."/>
            <person name="Pavesi G."/>
            <person name="Pesole G."/>
            <person name="Petrovsky N."/>
            <person name="Piazza S."/>
            <person name="Reed J."/>
            <person name="Reid J.F."/>
            <person name="Ring B.Z."/>
            <person name="Ringwald M."/>
            <person name="Rost B."/>
            <person name="Ruan Y."/>
            <person name="Salzberg S.L."/>
            <person name="Sandelin A."/>
            <person name="Schneider C."/>
            <person name="Schoenbach C."/>
            <person name="Sekiguchi K."/>
            <person name="Semple C.A."/>
            <person name="Seno S."/>
            <person name="Sessa L."/>
            <person name="Sheng Y."/>
            <person name="Shibata Y."/>
            <person name="Shimada H."/>
            <person name="Shimada K."/>
            <person name="Silva D."/>
            <person name="Sinclair B."/>
            <person name="Sperling S."/>
            <person name="Stupka E."/>
            <person name="Sugiura K."/>
            <person name="Sultana R."/>
            <person name="Takenaka Y."/>
            <person name="Taki K."/>
            <person name="Tammoja K."/>
            <person name="Tan S.L."/>
            <person name="Tang S."/>
            <person name="Taylor M.S."/>
            <person name="Tegner J."/>
            <person name="Teichmann S.A."/>
            <person name="Ueda H.R."/>
            <person name="van Nimwegen E."/>
            <person name="Verardo R."/>
            <person name="Wei C.L."/>
            <person name="Yagi K."/>
            <person name="Yamanishi H."/>
            <person name="Zabarovsky E."/>
            <person name="Zhu S."/>
            <person name="Zimmer A."/>
            <person name="Hide W."/>
            <person name="Bult C."/>
            <person name="Grimmond S.M."/>
            <person name="Teasdale R.D."/>
            <person name="Liu E.T."/>
            <person name="Brusic V."/>
            <person name="Quackenbush J."/>
            <person name="Wahlestedt C."/>
            <person name="Mattick J.S."/>
            <person name="Hume D.A."/>
            <person name="Kai C."/>
            <person name="Sasaki D."/>
            <person name="Tomaru Y."/>
            <person name="Fukuda S."/>
            <person name="Kanamori-Katayama M."/>
            <person name="Suzuki M."/>
            <person name="Aoki J."/>
            <person name="Arakawa T."/>
            <person name="Iida J."/>
            <person name="Imamura K."/>
            <person name="Itoh M."/>
            <person name="Kato T."/>
            <person name="Kawaji H."/>
            <person name="Kawagashira N."/>
            <person name="Kawashima T."/>
            <person name="Kojima M."/>
            <person name="Kondo S."/>
            <person name="Konno H."/>
            <person name="Nakano K."/>
            <person name="Ninomiya N."/>
            <person name="Nishio T."/>
            <person name="Okada M."/>
            <person name="Plessy C."/>
            <person name="Shibata K."/>
            <person name="Shiraki T."/>
            <person name="Suzuki S."/>
            <person name="Tagami M."/>
            <person name="Waki K."/>
            <person name="Watahiki A."/>
            <person name="Okamura-Oho Y."/>
            <person name="Suzuki H."/>
            <person name="Kawai J."/>
            <person name="Hayashizaki Y."/>
        </authorList>
    </citation>
    <scope>NUCLEOTIDE SEQUENCE [LARGE SCALE MRNA]</scope>
    <source>
        <strain>C57BL/6J</strain>
        <tissue>Liver</tissue>
    </source>
</reference>
<reference key="4">
    <citation type="journal article" date="2004" name="Genome Res.">
        <title>The status, quality, and expansion of the NIH full-length cDNA project: the Mammalian Gene Collection (MGC).</title>
        <authorList>
            <consortium name="The MGC Project Team"/>
        </authorList>
    </citation>
    <scope>NUCLEOTIDE SEQUENCE [LARGE SCALE MRNA]</scope>
    <source>
        <tissue>Limb</tissue>
        <tissue>Mammary gland</tissue>
    </source>
</reference>
<reference key="5">
    <citation type="journal article" date="2003" name="J. Biol. Chem.">
        <title>Sphingosine kinase 2 is a nuclear protein and inhibits DNA synthesis.</title>
        <authorList>
            <person name="Igarashi N."/>
            <person name="Okada T."/>
            <person name="Hayashi S."/>
            <person name="Fujita T."/>
            <person name="Jahangeer S."/>
            <person name="Nakamura S."/>
        </authorList>
    </citation>
    <scope>SUBCELLULAR LOCATION</scope>
    <scope>MUTAGENESIS OF 93-ARG-ARG-94</scope>
</reference>
<reference key="6">
    <citation type="journal article" date="2005" name="J. Biol. Chem.">
        <title>SphK1 and SphK2, sphingosine kinase isoenzymes with opposing functions in sphingolipid metabolism.</title>
        <authorList>
            <person name="Maceyka M."/>
            <person name="Sankala H."/>
            <person name="Hait N.C."/>
            <person name="Le Stunff H."/>
            <person name="Liu H."/>
            <person name="Toman R."/>
            <person name="Collier C."/>
            <person name="Zhang M."/>
            <person name="Satin L.S."/>
            <person name="Merrill A.H. Jr."/>
            <person name="Milstien S."/>
            <person name="Spiegel S."/>
        </authorList>
    </citation>
    <scope>FUNCTION</scope>
    <scope>CATALYTIC ACTIVITY</scope>
    <scope>MUTAGENESIS OF GLY-213 AND LEU-219</scope>
    <scope>SUBCELLULAR LOCATION</scope>
</reference>
<reference key="7">
    <citation type="journal article" date="2005" name="Mol. Cell. Biol.">
        <title>Essential role for sphingosine kinases in neural and vascular development.</title>
        <authorList>
            <person name="Mizugishi K."/>
            <person name="Yamashita T."/>
            <person name="Olivera A."/>
            <person name="Miller G.F."/>
            <person name="Spiegel S."/>
            <person name="Proia R.L."/>
        </authorList>
    </citation>
    <scope>DISRUPTION PHENOTYPE</scope>
    <scope>DEVELOPMENTAL STAGE</scope>
</reference>
<reference key="8">
    <citation type="journal article" date="2007" name="Immunity">
        <title>The sphingosine kinase-sphingosine-1-phosphate axis is a determinant of mast cell function and anaphylaxis.</title>
        <authorList>
            <person name="Olivera A."/>
            <person name="Mizugishi K."/>
            <person name="Tikhonova A."/>
            <person name="Ciaccia L."/>
            <person name="Odom S."/>
            <person name="Proia R.L."/>
            <person name="Rivera J."/>
        </authorList>
    </citation>
    <scope>FUNCTION</scope>
    <scope>TISSUE SPECIFICITY</scope>
    <scope>CATALYTIC ACTIVITY</scope>
</reference>
<reference key="9">
    <citation type="journal article" date="2010" name="Cell">
        <title>A tissue-specific atlas of mouse protein phosphorylation and expression.</title>
        <authorList>
            <person name="Huttlin E.L."/>
            <person name="Jedrychowski M.P."/>
            <person name="Elias J.E."/>
            <person name="Goswami T."/>
            <person name="Rad R."/>
            <person name="Beausoleil S.A."/>
            <person name="Villen J."/>
            <person name="Haas W."/>
            <person name="Sowa M.E."/>
            <person name="Gygi S.P."/>
        </authorList>
    </citation>
    <scope>PHOSPHORYLATION [LARGE SCALE ANALYSIS] AT SER-358; SER-364 AND THR-377</scope>
    <scope>IDENTIFICATION BY MASS SPECTROMETRY [LARGE SCALE ANALYSIS]</scope>
    <source>
        <tissue>Brain</tissue>
        <tissue>Brown adipose tissue</tissue>
        <tissue>Heart</tissue>
        <tissue>Kidney</tissue>
        <tissue>Liver</tissue>
        <tissue>Lung</tissue>
        <tissue>Spleen</tissue>
        <tissue>Testis</tissue>
    </source>
</reference>
<reference key="10">
    <citation type="journal article" date="2011" name="FASEB J.">
        <title>Sphingosine-1-phosphate produced by sphingosine kinase 2 in mitochondria interacts with prohibitin 2 to regulate complex IV assembly and respiration.</title>
        <authorList>
            <person name="Strub G.M."/>
            <person name="Paillard M."/>
            <person name="Liang J."/>
            <person name="Gomez L."/>
            <person name="Allegood J.C."/>
            <person name="Hait N.C."/>
            <person name="Maceyka M."/>
            <person name="Price M.M."/>
            <person name="Chen Q."/>
            <person name="Simpson D.C."/>
            <person name="Kordula T."/>
            <person name="Milstien S."/>
            <person name="Lesnefsky E.J."/>
            <person name="Spiegel S."/>
        </authorList>
    </citation>
    <scope>FUNCTION</scope>
    <scope>SUBCELLULAR LOCATION</scope>
    <scope>INTERACTION WITH PHB2</scope>
</reference>
<reference key="11">
    <citation type="journal article" date="2011" name="J. Biol. Chem.">
        <title>The sphingosine 1-phosphate transporter, SPNS2, functions as a transporter of the phosphorylated form of the immunomodulating agent FTY720.</title>
        <authorList>
            <person name="Hisano Y."/>
            <person name="Kobayashi N."/>
            <person name="Kawahara A."/>
            <person name="Yamaguchi A."/>
            <person name="Nishi T."/>
        </authorList>
    </citation>
    <scope>FUNCTION</scope>
</reference>
<reference key="12">
    <citation type="journal article" date="2015" name="Neuroscience">
        <title>Sphingosine kinase 2 and sphingosine-1-phosphate promotes mitochondrial function in dopaminergic neurons of mouse model of Parkinson's disease and in MPP+ -treated MN9D cells in vitro.</title>
        <authorList>
            <person name="Sivasubramanian M."/>
            <person name="Kanagaraj N."/>
            <person name="Dheen S.T."/>
            <person name="Tay S.S."/>
        </authorList>
    </citation>
    <scope>FUNCTION</scope>
    <scope>TISSUE SPECIFICITY</scope>
    <scope>INDUCTION BY MPTP</scope>
    <scope>SUBCELLULAR LOCATION</scope>
</reference>
<reference key="13">
    <citation type="journal article" date="2019" name="Biochim. Biophys. Acta">
        <title>Sphk2-/- mice are protected from obesity and insulin resistance.</title>
        <authorList>
            <person name="Ravichandran S."/>
            <person name="Finlin B.S."/>
            <person name="Kern P.A."/>
            <person name="Oezcan S."/>
        </authorList>
    </citation>
    <scope>FUNCTION</scope>
    <scope>DISRUPTION PHENOTYPE</scope>
</reference>
<feature type="chain" id="PRO_0000181359" description="Sphingosine kinase 2">
    <location>
        <begin position="1"/>
        <end position="617"/>
    </location>
</feature>
<feature type="domain" description="DAGKc" evidence="3">
    <location>
        <begin position="143"/>
        <end position="290"/>
    </location>
</feature>
<feature type="region of interest" description="Required for binding to sulfatide and phosphoinositides and for membrane localization" evidence="1">
    <location>
        <begin position="1"/>
        <end position="140"/>
    </location>
</feature>
<feature type="region of interest" description="Disordered" evidence="4">
    <location>
        <begin position="371"/>
        <end position="472"/>
    </location>
</feature>
<feature type="short sequence motif" description="Nuclear localization signal" evidence="6">
    <location>
        <begin position="87"/>
        <end position="95"/>
    </location>
</feature>
<feature type="short sequence motif" description="Nuclear export signal" evidence="1">
    <location>
        <begin position="381"/>
        <end position="390"/>
    </location>
</feature>
<feature type="compositionally biased region" description="Gly residues" evidence="4">
    <location>
        <begin position="412"/>
        <end position="426"/>
    </location>
</feature>
<feature type="active site" description="Proton donor/acceptor" evidence="2">
    <location>
        <position position="212"/>
    </location>
</feature>
<feature type="binding site" evidence="3">
    <location>
        <begin position="153"/>
        <end position="155"/>
    </location>
    <ligand>
        <name>ATP</name>
        <dbReference type="ChEBI" id="CHEBI:30616"/>
    </ligand>
</feature>
<feature type="binding site" evidence="3">
    <location>
        <begin position="185"/>
        <end position="189"/>
    </location>
    <ligand>
        <name>ATP</name>
        <dbReference type="ChEBI" id="CHEBI:30616"/>
    </ligand>
</feature>
<feature type="binding site" evidence="2">
    <location>
        <begin position="210"/>
        <end position="213"/>
    </location>
    <ligand>
        <name>substrate</name>
    </ligand>
</feature>
<feature type="binding site" evidence="3">
    <location>
        <position position="217"/>
    </location>
    <ligand>
        <name>ATP</name>
        <dbReference type="ChEBI" id="CHEBI:30616"/>
    </ligand>
</feature>
<feature type="binding site" evidence="3">
    <location>
        <begin position="242"/>
        <end position="244"/>
    </location>
    <ligand>
        <name>ATP</name>
        <dbReference type="ChEBI" id="CHEBI:30616"/>
    </ligand>
</feature>
<feature type="binding site" evidence="2">
    <location>
        <position position="309"/>
    </location>
    <ligand>
        <name>substrate</name>
    </ligand>
</feature>
<feature type="binding site" evidence="3">
    <location>
        <position position="316"/>
    </location>
    <ligand>
        <name>ATP</name>
        <dbReference type="ChEBI" id="CHEBI:30616"/>
    </ligand>
</feature>
<feature type="binding site" evidence="3">
    <location>
        <position position="322"/>
    </location>
    <ligand>
        <name>ATP</name>
        <dbReference type="ChEBI" id="CHEBI:30616"/>
    </ligand>
</feature>
<feature type="binding site" evidence="3">
    <location>
        <begin position="586"/>
        <end position="588"/>
    </location>
    <ligand>
        <name>ATP</name>
        <dbReference type="ChEBI" id="CHEBI:30616"/>
    </ligand>
</feature>
<feature type="modified residue" description="Phosphoserine" evidence="16">
    <location>
        <position position="358"/>
    </location>
</feature>
<feature type="modified residue" description="Phosphoserine" evidence="16">
    <location>
        <position position="364"/>
    </location>
</feature>
<feature type="modified residue" description="Phosphothreonine" evidence="16">
    <location>
        <position position="377"/>
    </location>
</feature>
<feature type="modified residue" description="Phosphoserine" evidence="1">
    <location>
        <position position="384"/>
    </location>
</feature>
<feature type="modified residue" description="Phosphoserine" evidence="1">
    <location>
        <position position="386"/>
    </location>
</feature>
<feature type="modified residue" description="Phosphothreonine" evidence="1">
    <location>
        <position position="578"/>
    </location>
</feature>
<feature type="mutagenesis site" description="Loss of nuclear location. Loss of DNA synthesis inhibition." evidence="6">
    <original>RR</original>
    <variation>EE</variation>
    <location>
        <begin position="93"/>
        <end position="94"/>
    </location>
</feature>
<feature type="mutagenesis site" description="Abolishes sphingosine kinase activity. Decreases apoptosis induction. Abolishes sphingosine kinase activity. No effect on endoplasmic reticulum location increase upon serum starvation. Abolishes sphingosine kinase activity and decreases apoptosis induction; when associated with A-219." evidence="7">
    <original>G</original>
    <variation>E</variation>
    <location>
        <position position="213"/>
    </location>
</feature>
<feature type="mutagenesis site" description="Strongly decreases sphingosine kinase activity. Decreases apoptosis induction. No effect on endoplasmic reticulum location increase upon serum starvation. Abolishes sphingosine kinase activity and decreases apoptosis induction; when associated with E-213." evidence="7">
    <original>L</original>
    <variation>A</variation>
    <location>
        <position position="219"/>
    </location>
</feature>
<feature type="sequence conflict" description="In Ref. 1; AAF74125." evidence="14" ref="1">
    <original>N</original>
    <variation>S</variation>
    <location>
        <position position="252"/>
    </location>
</feature>
<feature type="sequence conflict" description="In Ref. 1; AAF74125." evidence="14" ref="1">
    <original>P</original>
    <variation>T</variation>
    <location>
        <position position="510"/>
    </location>
</feature>
<feature type="sequence conflict" description="In Ref. 1; AAF74125." evidence="14" ref="1">
    <original>L</original>
    <variation>F</variation>
    <location>
        <position position="548"/>
    </location>
</feature>
<accession>Q9JIA7</accession>
<accession>Q91VA9</accession>
<accession>Q9DBH6</accession>
<evidence type="ECO:0000250" key="1">
    <source>
        <dbReference type="UniProtKB" id="Q9NRA0"/>
    </source>
</evidence>
<evidence type="ECO:0000250" key="2">
    <source>
        <dbReference type="UniProtKB" id="Q9NYA1"/>
    </source>
</evidence>
<evidence type="ECO:0000255" key="3">
    <source>
        <dbReference type="PROSITE-ProRule" id="PRU00783"/>
    </source>
</evidence>
<evidence type="ECO:0000256" key="4">
    <source>
        <dbReference type="SAM" id="MobiDB-lite"/>
    </source>
</evidence>
<evidence type="ECO:0000269" key="5">
    <source>
    </source>
</evidence>
<evidence type="ECO:0000269" key="6">
    <source>
    </source>
</evidence>
<evidence type="ECO:0000269" key="7">
    <source>
    </source>
</evidence>
<evidence type="ECO:0000269" key="8">
    <source>
    </source>
</evidence>
<evidence type="ECO:0000269" key="9">
    <source>
    </source>
</evidence>
<evidence type="ECO:0000269" key="10">
    <source>
    </source>
</evidence>
<evidence type="ECO:0000269" key="11">
    <source>
    </source>
</evidence>
<evidence type="ECO:0000269" key="12">
    <source>
    </source>
</evidence>
<evidence type="ECO:0000269" key="13">
    <source>
    </source>
</evidence>
<evidence type="ECO:0000305" key="14"/>
<evidence type="ECO:0000312" key="15">
    <source>
        <dbReference type="MGI" id="MGI:1861380"/>
    </source>
</evidence>
<evidence type="ECO:0007744" key="16">
    <source>
    </source>
</evidence>
<proteinExistence type="evidence at protein level"/>
<comment type="function">
    <text evidence="1 5 7 9 10 11 12 13">Catalyzes the phosphorylation of sphingosine to form sphingosine-1-phosphate (SPP), a lipid mediator with both intra- and extracellular functions (PubMed:16118219, PubMed:17346996, PubMed:21084291). Also acts on D-erythro-dihydrosphingosine, D-erythro-sphingosine and L-threo-dihydrosphingosine. Binds phosphoinositides (PubMed:10751414, PubMed:16118219). In contrast to prosurvival SPHK1, has a positive effect on intracellular ceramide levels, inhibits cells growth and enhances apoptosis (PubMed:16118219). In mitochondria, is important for cytochrome-c oxidase assembly and mitochondrial respiration. The SPP produced in mitochondria binds PHB2 and modulates the regulation via PHB2 of complex IV assembly and respiration (PubMed:20959514). In nucleus, plays a role in epigenetic regulation of gene expression. Interacts with HDAC1 and HDAC2 and, through SPP production, inhibits their enzymatic activity, preventing the removal of acetyl groups from lysine residues with histones. Up-regulates acetylation of histone H3-K9, histone H4-K5 and histone H2B-K12. In nucleus, may have an inhibitory effect on DNA synthesis and cell cycle (By similarity). In mast cells, is the main regulator of SPP production which mediates calcium influx, NF-kappa-B activation, cytokine production, such as TNF and IL6, and degranulation of mast cells (PubMed:17346996). In dopaminergic neurons, is involved in promoting mitochondrial functions regulating ATP and ROS levels (PubMed:25637806). Also involved in the regulation of glucose and lipid metabolism (PubMed:30593892).</text>
</comment>
<comment type="catalytic activity">
    <reaction evidence="7 9">
        <text>a sphingoid base + ATP = a sphingoid 1-phosphate + ADP + H(+)</text>
        <dbReference type="Rhea" id="RHEA:51496"/>
        <dbReference type="ChEBI" id="CHEBI:15378"/>
        <dbReference type="ChEBI" id="CHEBI:30616"/>
        <dbReference type="ChEBI" id="CHEBI:76941"/>
        <dbReference type="ChEBI" id="CHEBI:84410"/>
        <dbReference type="ChEBI" id="CHEBI:456216"/>
        <dbReference type="EC" id="2.7.1.91"/>
    </reaction>
    <physiologicalReaction direction="left-to-right" evidence="9">
        <dbReference type="Rhea" id="RHEA:51497"/>
    </physiologicalReaction>
</comment>
<comment type="catalytic activity">
    <reaction evidence="5">
        <text>sphing-4-enine + ATP = sphing-4-enine 1-phosphate + ADP + H(+)</text>
        <dbReference type="Rhea" id="RHEA:35847"/>
        <dbReference type="ChEBI" id="CHEBI:15378"/>
        <dbReference type="ChEBI" id="CHEBI:30616"/>
        <dbReference type="ChEBI" id="CHEBI:57756"/>
        <dbReference type="ChEBI" id="CHEBI:60119"/>
        <dbReference type="ChEBI" id="CHEBI:456216"/>
        <dbReference type="EC" id="2.7.1.91"/>
    </reaction>
    <physiologicalReaction direction="left-to-right" evidence="5">
        <dbReference type="Rhea" id="RHEA:35848"/>
    </physiologicalReaction>
</comment>
<comment type="catalytic activity">
    <reaction evidence="5">
        <text>sphinganine + ATP = sphinganine 1-phosphate + ADP + H(+)</text>
        <dbReference type="Rhea" id="RHEA:15465"/>
        <dbReference type="ChEBI" id="CHEBI:15378"/>
        <dbReference type="ChEBI" id="CHEBI:30616"/>
        <dbReference type="ChEBI" id="CHEBI:57817"/>
        <dbReference type="ChEBI" id="CHEBI:57939"/>
        <dbReference type="ChEBI" id="CHEBI:456216"/>
        <dbReference type="EC" id="2.7.1.91"/>
    </reaction>
    <physiologicalReaction direction="left-to-right" evidence="5">
        <dbReference type="Rhea" id="RHEA:15466"/>
    </physiologicalReaction>
</comment>
<comment type="catalytic activity">
    <reaction evidence="5">
        <text>(4R)-hydroxysphinganine + ATP = (4R)-hydroxysphinganine 1-phosphate + ADP + H(+)</text>
        <dbReference type="Rhea" id="RHEA:33563"/>
        <dbReference type="ChEBI" id="CHEBI:15378"/>
        <dbReference type="ChEBI" id="CHEBI:30616"/>
        <dbReference type="ChEBI" id="CHEBI:64124"/>
        <dbReference type="ChEBI" id="CHEBI:64795"/>
        <dbReference type="ChEBI" id="CHEBI:456216"/>
        <dbReference type="EC" id="2.7.1.91"/>
    </reaction>
    <physiologicalReaction direction="left-to-right" evidence="5">
        <dbReference type="Rhea" id="RHEA:33564"/>
    </physiologicalReaction>
</comment>
<comment type="cofactor">
    <cofactor evidence="2">
        <name>Mg(2+)</name>
        <dbReference type="ChEBI" id="CHEBI:18420"/>
    </cofactor>
</comment>
<comment type="biophysicochemical properties">
    <kinetics>
        <KM evidence="5">3.4 uM for sphing-4-enine</KM>
        <Vmax evidence="5">0.1 nmol/min/mg enzyme</Vmax>
        <Vmax>0.3 nmol/min/mg enzyme (in the presence of 50 mM KCl)</Vmax>
        <Vmax>1.0 nmol/min/mg enzyme (in the presence of 200 mM KCl)</Vmax>
    </kinetics>
    <phDependence>
        <text evidence="5">Optimum pH is 7.5.</text>
    </phDependence>
</comment>
<comment type="subunit">
    <text evidence="1 10">Interacts with histone H3. Interacts with HDAC1, HDAC2, MBD2 and SIN3A. Interacts with EEF1A1; the interaction enhances SPHK2 kinase activity (By similarity). Interacts with PHB2 (PubMed:20959514).</text>
</comment>
<comment type="interaction">
    <interactant intactId="EBI-985434">
        <id>Q9JIA7</id>
    </interactant>
    <interactant intactId="EBI-524514">
        <id>P39688</id>
        <label>Fyn</label>
    </interactant>
    <organismsDiffer>false</organismsDiffer>
    <experiments>2</experiments>
</comment>
<comment type="subcellular location">
    <subcellularLocation>
        <location evidence="1">Lysosome membrane</location>
    </subcellularLocation>
    <subcellularLocation>
        <location evidence="6 7">Cytoplasm</location>
    </subcellularLocation>
    <subcellularLocation>
        <location evidence="7">Cell membrane</location>
    </subcellularLocation>
    <subcellularLocation>
        <location evidence="7">Endoplasmic reticulum</location>
    </subcellularLocation>
    <subcellularLocation>
        <location evidence="6 10">Nucleus</location>
    </subcellularLocation>
    <subcellularLocation>
        <location evidence="10 12">Mitochondrion inner membrane</location>
    </subcellularLocation>
    <text evidence="1">In nucleus, is located in nucleosomes where it associates with core histone proteins such as histone 3. In apoptotic cells, colocalizes with CASP1 in cell membrane where is cleaved and released from cells in an active form.</text>
</comment>
<comment type="tissue specificity">
    <text evidence="5 9 12">Expressed in heart, brain, liver, kidney and testis (PubMed:10751414). Expressed by mast cells (at protein level) (PubMed:17346996). In the substantia nigra, expressed by dopaminergic neurons (at protein level) (PubMed:25637806).</text>
</comment>
<comment type="developmental stage">
    <text evidence="8">At 10.5 dpc, expression is relatively ubiquitous with the strongest signals detected in the limb buds, eyes and branchial arches and a weaker expression in the telencephalon and spinal cord.</text>
</comment>
<comment type="induction">
    <text evidence="12">Expressopm decreases upon treatment with 1-methyl-4-phenyl-1,2,3,6-tetrahydropyridine (MPTP) which is used to induce Parkinson disease in mouse model.</text>
</comment>
<comment type="PTM">
    <text evidence="1">Phosphorylated by PKD on Ser-384 and Ser-386 upon PMA treatment. Phosphorylation induces export from the nucleus to the cytoplasm. Phosphorylated by MAPK1 and MAPK2 at Thr-578, phosphorylation is induced by agonists such as EGF and PMA and increases kinase activity.</text>
</comment>
<comment type="PTM">
    <text evidence="1">Cleaved by CASP1 in apoptotic cells. The truncated form is released from cells.</text>
</comment>
<comment type="disruption phenotype">
    <text evidence="8 13">Mutant mice are viable, fertile and have normal longevity. They show reduced SPP levels (PubMed:16314531). Mice have decreased fat mass but increased lean mass, they display increased energy expenditure compared to wild-type. Aging mice are protected from metabolic decline and obesity. 52-week old male mutant mice have decreased weight and fat mass, and increased glucose tolerance and insulin sensitivity compared to control mice (PubMed:30593892). Double knockout for SPHK1 and SPHK2 causes embryonic lethality (PubMed:16314531). Between 11.5 dpc and 12.5 dpc embryos exhibit cranial hemorrhage and die at 13.5 dpc (PubMed:16314531). At 11.5 dpc the wall of the dorsal aorta is poorly developed and endothelial cells are severely defective in all blood vessels in the mesenchymal region of the head (PubMed:16314531). Embryos also show a neural tube defect (PubMed:16314531).</text>
</comment>
<gene>
    <name evidence="15" type="primary">Sphk2</name>
</gene>
<organism>
    <name type="scientific">Mus musculus</name>
    <name type="common">Mouse</name>
    <dbReference type="NCBI Taxonomy" id="10090"/>
    <lineage>
        <taxon>Eukaryota</taxon>
        <taxon>Metazoa</taxon>
        <taxon>Chordata</taxon>
        <taxon>Craniata</taxon>
        <taxon>Vertebrata</taxon>
        <taxon>Euteleostomi</taxon>
        <taxon>Mammalia</taxon>
        <taxon>Eutheria</taxon>
        <taxon>Euarchontoglires</taxon>
        <taxon>Glires</taxon>
        <taxon>Rodentia</taxon>
        <taxon>Myomorpha</taxon>
        <taxon>Muroidea</taxon>
        <taxon>Muridae</taxon>
        <taxon>Murinae</taxon>
        <taxon>Mus</taxon>
        <taxon>Mus</taxon>
    </lineage>
</organism>
<protein>
    <recommendedName>
        <fullName evidence="14">Sphingosine kinase 2</fullName>
        <shortName>SK 2</shortName>
        <shortName>SPK 2</shortName>
        <ecNumber evidence="5 7 9">2.7.1.91</ecNumber>
    </recommendedName>
</protein>
<keyword id="KW-0067">ATP-binding</keyword>
<keyword id="KW-1003">Cell membrane</keyword>
<keyword id="KW-0963">Cytoplasm</keyword>
<keyword id="KW-0256">Endoplasmic reticulum</keyword>
<keyword id="KW-0418">Kinase</keyword>
<keyword id="KW-0443">Lipid metabolism</keyword>
<keyword id="KW-0458">Lysosome</keyword>
<keyword id="KW-0472">Membrane</keyword>
<keyword id="KW-0496">Mitochondrion</keyword>
<keyword id="KW-0999">Mitochondrion inner membrane</keyword>
<keyword id="KW-0547">Nucleotide-binding</keyword>
<keyword id="KW-0539">Nucleus</keyword>
<keyword id="KW-0597">Phosphoprotein</keyword>
<keyword id="KW-1185">Reference proteome</keyword>
<keyword id="KW-0808">Transferase</keyword>
<sequence>MAPPPLLPVAASTPILHGEFGSYPANGPRFALTLTTQALHIQRLRPKPEARPRDGLVSLDEVSGCGTLQSRSPEDTAAYFCIYTYPRGRRGGRRRATRTFRADGATTYEENRAEAQRWATALTCLLRGVPLSGDQEITPELLPRKPRLLILVNPFGGRGLAWQRCMDHVVPMISEAGLSFNLIQTERQNHARELVQGLSLSEWEGIVTVSGDGLLYEVLNGLLDRPDWEDAVRMPIGVLPCGSGNALAGAVNHHGGFEQVVGVDLLLNCSLLLCRGGSHPLDLLSVTLASGSRCFSFLSVAWGFLSDVDIHSERFRALGSARFTLGAVLGLASLHTYRGRLSYLPATTEPALPIPGHSLPRAKSELVLAPAPAPAATHSPLHRSVSDLPLPLPQPALVSPGSPEPLPDLSLNGGGPELTGDWGGAGDAPLSPDPLLPSSPNALKTAQLSPIAEGPPEMPASSGFLPPTHSAPEASTWGPVDHLLPPLGSPLPQDWVTIEGEFVLMLGILPSHLCADLMAAPHARFDDGVVHLCWVRSGISRAALLRILLAMEHGNHFSLGCPHLGYAAARAFRLEPLTPRGLLTVDGELVEYGPIQAQVHPGLATLLTGPAGQKPQA</sequence>